<evidence type="ECO:0000250" key="1">
    <source>
        <dbReference type="UniProtKB" id="P27628"/>
    </source>
</evidence>
<evidence type="ECO:0000250" key="2">
    <source>
        <dbReference type="UniProtKB" id="Q9NNX1"/>
    </source>
</evidence>
<evidence type="ECO:0000255" key="3"/>
<evidence type="ECO:0000256" key="4">
    <source>
        <dbReference type="SAM" id="MobiDB-lite"/>
    </source>
</evidence>
<evidence type="ECO:0000269" key="5">
    <source>
    </source>
</evidence>
<evidence type="ECO:0000269" key="6">
    <source>
    </source>
</evidence>
<evidence type="ECO:0000269" key="7">
    <source>
    </source>
</evidence>
<evidence type="ECO:0000269" key="8">
    <source>
    </source>
</evidence>
<evidence type="ECO:0000303" key="9">
    <source>
    </source>
</evidence>
<evidence type="ECO:0000303" key="10">
    <source>
    </source>
</evidence>
<evidence type="ECO:0000305" key="11"/>
<feature type="chain" id="PRO_0000183187" description="Tuftelin">
    <location>
        <begin position="1"/>
        <end position="390"/>
    </location>
</feature>
<feature type="region of interest" description="Disordered" evidence="4">
    <location>
        <begin position="356"/>
        <end position="383"/>
    </location>
</feature>
<feature type="coiled-coil region" evidence="3">
    <location>
        <begin position="88"/>
        <end position="126"/>
    </location>
</feature>
<feature type="coiled-coil region" evidence="3">
    <location>
        <begin position="163"/>
        <end position="352"/>
    </location>
</feature>
<feature type="splice variant" id="VSP_006687" description="In isoform 2 and isoform 3." evidence="9 10">
    <location>
        <begin position="21"/>
        <end position="45"/>
    </location>
</feature>
<feature type="splice variant" id="VSP_006688" description="In isoform 3." evidence="9">
    <location>
        <begin position="46"/>
        <end position="80"/>
    </location>
</feature>
<gene>
    <name type="primary">Tuft1</name>
</gene>
<proteinExistence type="evidence at protein level"/>
<sequence length="390" mass="44576">MNGTRNWCTLVDVHPESQTAGSVDILRLTLQSELTGDELEHIAQKAGRKTYAMMPGHSSGHSLASELVESHDGHEEIIKVYLKGRSGDKMTHEKNIDQLKSEVQYIQEARNCLQKLREDISSKLDRSPGDPLRQQEIQVVLEKPNGFSQSPMTLYSSPPEVDPSMSEDVESLKKTVQELLVKLREAERRHQSDRVAFEVTLSRYQREAEQSNVALQREEDRVEQKAAEIEELQRRLLGMEAEHQALLVKVREGEMALEELRIKNADCQTEREKSAALEKEVAGFREKIHHLDDMLKSQQRKVRQMIEQLQNSKAVIQSKDATIQELKEKIAYLEAENLEMHDRMEHLIEKQVSHGNFSTQARAKTENLGSVRISKPPSPKPMPLIRVVET</sequence>
<organism>
    <name type="scientific">Mus musculus</name>
    <name type="common">Mouse</name>
    <dbReference type="NCBI Taxonomy" id="10090"/>
    <lineage>
        <taxon>Eukaryota</taxon>
        <taxon>Metazoa</taxon>
        <taxon>Chordata</taxon>
        <taxon>Craniata</taxon>
        <taxon>Vertebrata</taxon>
        <taxon>Euteleostomi</taxon>
        <taxon>Mammalia</taxon>
        <taxon>Eutheria</taxon>
        <taxon>Euarchontoglires</taxon>
        <taxon>Glires</taxon>
        <taxon>Rodentia</taxon>
        <taxon>Myomorpha</taxon>
        <taxon>Muroidea</taxon>
        <taxon>Muridae</taxon>
        <taxon>Murinae</taxon>
        <taxon>Mus</taxon>
        <taxon>Mus</taxon>
    </lineage>
</organism>
<accession>O08970</accession>
<reference key="1">
    <citation type="journal article" date="1998" name="J. Dent. Res.">
        <title>Cloning, characterization, and tissue expression pattern of mouse tuftelin cDNA.</title>
        <authorList>
            <person name="MacDougall M."/>
            <person name="Simmons D."/>
            <person name="Dodds A."/>
            <person name="Knight C."/>
            <person name="Luan X."/>
            <person name="Zeichner-David M."/>
            <person name="Zhang C."/>
            <person name="Ryu O.H."/>
            <person name="Qian Q."/>
            <person name="Simmer J.P."/>
            <person name="Hu C.-C."/>
        </authorList>
    </citation>
    <scope>NUCLEOTIDE SEQUENCE [MRNA] (ISOFORMS 1 AND 2)</scope>
    <scope>TISSUE SPECIFICITY</scope>
    <source>
        <strain>Swiss Webster</strain>
        <tissue>Tooth</tissue>
    </source>
</reference>
<reference key="2">
    <citation type="journal article" date="2001" name="Gene">
        <title>The human tuftelin gene: cloning and characterization.</title>
        <authorList>
            <person name="Mao Z."/>
            <person name="Shay B."/>
            <person name="Hekmati M."/>
            <person name="Fermon E."/>
            <person name="Taylor A."/>
            <person name="Dafni L."/>
            <person name="Heikinheimo K."/>
            <person name="Lustmann J."/>
            <person name="Fisher L.W."/>
            <person name="Young M.F."/>
            <person name="Deutsch D."/>
        </authorList>
    </citation>
    <scope>NUCLEOTIDE SEQUENCE [MRNA] (ISOFORMS 1; 2 AND 3)</scope>
</reference>
<reference key="3">
    <citation type="journal article" date="2004" name="Genome Res.">
        <title>The status, quality, and expansion of the NIH full-length cDNA project: the Mammalian Gene Collection (MGC).</title>
        <authorList>
            <consortium name="The MGC Project Team"/>
        </authorList>
    </citation>
    <scope>NUCLEOTIDE SEQUENCE [LARGE SCALE MRNA] (ISOFORM 1)</scope>
    <source>
        <tissue>Kidney</tissue>
    </source>
</reference>
<reference key="4">
    <citation type="journal article" date="1997" name="Int. J. Dev. Biol.">
        <title>Timing of the expression of enamel gene products during mouse tooth development.</title>
        <authorList>
            <person name="Zeichner-David M."/>
            <person name="Vo H."/>
            <person name="Tan H."/>
            <person name="Diekwisch T."/>
            <person name="Berman B."/>
            <person name="Thiemann F."/>
            <person name="Alcocer M.D."/>
            <person name="Hsu P."/>
            <person name="Wang T."/>
            <person name="Eyna J."/>
            <person name="Caton J."/>
            <person name="Slavkin H.C."/>
            <person name="MacDougall M."/>
        </authorList>
    </citation>
    <scope>NUCLEOTIDE SEQUENCE [MRNA] OF 7-324 (ISOFORM 1)</scope>
    <scope>CHARACTERIZATION</scope>
    <scope>DEVELOPMENTAL STAGE</scope>
    <source>
        <strain>Swiss Webster</strain>
    </source>
</reference>
<reference key="5">
    <citation type="journal article" date="2000" name="J. Biol. Chem.">
        <title>A tuftelin-interacting protein (TIP39) localizes to the apical secretory pole of mouse ameloblasts.</title>
        <authorList>
            <person name="Paine C.T."/>
            <person name="Paine M.L."/>
            <person name="Luo W."/>
            <person name="Okamoto C.T."/>
            <person name="Lyngstadaas S.P."/>
            <person name="Snead M.L."/>
        </authorList>
    </citation>
    <scope>INTERACTION WITH TFIP11</scope>
    <source>
        <strain>Swiss Webster</strain>
        <tissue>Tooth</tissue>
    </source>
</reference>
<reference key="6">
    <citation type="journal article" date="2011" name="J. Cell Sci.">
        <title>PERP regulates enamel formation via effects on cell-cell adhesion and gene expression.</title>
        <authorList>
            <person name="Jheon A.H."/>
            <person name="Mostowfi P."/>
            <person name="Snead M.L."/>
            <person name="Ihrie R.A."/>
            <person name="Sone E."/>
            <person name="Pramparo T."/>
            <person name="Attardi L.D."/>
            <person name="Klein O.D."/>
        </authorList>
    </citation>
    <scope>DEVELOPMENTAL STAGE</scope>
</reference>
<keyword id="KW-0025">Alternative splicing</keyword>
<keyword id="KW-0091">Biomineralization</keyword>
<keyword id="KW-0175">Coiled coil</keyword>
<keyword id="KW-1185">Reference proteome</keyword>
<keyword id="KW-0964">Secreted</keyword>
<name>TUFT1_MOUSE</name>
<protein>
    <recommendedName>
        <fullName>Tuftelin</fullName>
    </recommendedName>
</protein>
<dbReference type="EMBL" id="AF047704">
    <property type="protein sequence ID" value="AAC04577.1"/>
    <property type="molecule type" value="mRNA"/>
</dbReference>
<dbReference type="EMBL" id="BC019213">
    <property type="protein sequence ID" value="AAH19213.1"/>
    <property type="molecule type" value="mRNA"/>
</dbReference>
<dbReference type="EMBL" id="AF002860">
    <property type="protein sequence ID" value="AAB60891.1"/>
    <property type="molecule type" value="mRNA"/>
</dbReference>
<dbReference type="CCDS" id="CCDS17595.1">
    <molecule id="O08970-1"/>
</dbReference>
<dbReference type="CCDS" id="CCDS79975.1">
    <molecule id="O08970-2"/>
</dbReference>
<dbReference type="RefSeq" id="NP_001280657.1">
    <molecule id="O08970-2"/>
    <property type="nucleotide sequence ID" value="NM_001293728.1"/>
</dbReference>
<dbReference type="RefSeq" id="NP_035786.1">
    <molecule id="O08970-1"/>
    <property type="nucleotide sequence ID" value="NM_011656.3"/>
</dbReference>
<dbReference type="SMR" id="O08970"/>
<dbReference type="BioGRID" id="204382">
    <property type="interactions" value="1"/>
</dbReference>
<dbReference type="FunCoup" id="O08970">
    <property type="interactions" value="601"/>
</dbReference>
<dbReference type="IntAct" id="O08970">
    <property type="interactions" value="2"/>
</dbReference>
<dbReference type="STRING" id="10090.ENSMUSP00000006123"/>
<dbReference type="PhosphoSitePlus" id="O08970"/>
<dbReference type="PaxDb" id="10090-ENSMUSP00000006123"/>
<dbReference type="PeptideAtlas" id="O08970"/>
<dbReference type="ProteomicsDB" id="300060">
    <molecule id="O08970-1"/>
</dbReference>
<dbReference type="ProteomicsDB" id="300061">
    <molecule id="O08970-2"/>
</dbReference>
<dbReference type="ProteomicsDB" id="300062">
    <molecule id="O08970-3"/>
</dbReference>
<dbReference type="Antibodypedia" id="34066">
    <property type="antibodies" value="112 antibodies from 20 providers"/>
</dbReference>
<dbReference type="Ensembl" id="ENSMUST00000006123.11">
    <molecule id="O08970-1"/>
    <property type="protein sequence ID" value="ENSMUSP00000006123.4"/>
    <property type="gene ID" value="ENSMUSG00000005968.15"/>
</dbReference>
<dbReference type="Ensembl" id="ENSMUST00000196733.5">
    <molecule id="O08970-2"/>
    <property type="protein sequence ID" value="ENSMUSP00000143278.2"/>
    <property type="gene ID" value="ENSMUSG00000005968.15"/>
</dbReference>
<dbReference type="GeneID" id="22156"/>
<dbReference type="KEGG" id="mmu:22156"/>
<dbReference type="UCSC" id="uc008qgt.2">
    <molecule id="O08970-1"/>
    <property type="organism name" value="mouse"/>
</dbReference>
<dbReference type="AGR" id="MGI:109572"/>
<dbReference type="CTD" id="7286"/>
<dbReference type="MGI" id="MGI:109572">
    <property type="gene designation" value="Tuft1"/>
</dbReference>
<dbReference type="VEuPathDB" id="HostDB:ENSMUSG00000005968"/>
<dbReference type="eggNOG" id="ENOG502QW76">
    <property type="taxonomic scope" value="Eukaryota"/>
</dbReference>
<dbReference type="GeneTree" id="ENSGT00950000183065"/>
<dbReference type="InParanoid" id="O08970"/>
<dbReference type="OMA" id="HMEHFLA"/>
<dbReference type="OrthoDB" id="8944635at2759"/>
<dbReference type="PhylomeDB" id="O08970"/>
<dbReference type="TreeFam" id="TF331627"/>
<dbReference type="BioGRID-ORCS" id="22156">
    <property type="hits" value="3 hits in 75 CRISPR screens"/>
</dbReference>
<dbReference type="PRO" id="PR:O08970"/>
<dbReference type="Proteomes" id="UP000000589">
    <property type="component" value="Chromosome 3"/>
</dbReference>
<dbReference type="RNAct" id="O08970">
    <property type="molecule type" value="protein"/>
</dbReference>
<dbReference type="Bgee" id="ENSMUSG00000005968">
    <property type="expression patterns" value="Expressed in tail skin and 157 other cell types or tissues"/>
</dbReference>
<dbReference type="ExpressionAtlas" id="O08970">
    <property type="expression patterns" value="baseline and differential"/>
</dbReference>
<dbReference type="GO" id="GO:0005737">
    <property type="term" value="C:cytoplasm"/>
    <property type="evidence" value="ECO:0007669"/>
    <property type="project" value="Ensembl"/>
</dbReference>
<dbReference type="GO" id="GO:0005576">
    <property type="term" value="C:extracellular region"/>
    <property type="evidence" value="ECO:0007669"/>
    <property type="project" value="UniProtKB-SubCell"/>
</dbReference>
<dbReference type="GO" id="GO:0030280">
    <property type="term" value="F:structural constituent of skin epidermis"/>
    <property type="evidence" value="ECO:0000250"/>
    <property type="project" value="UniProtKB"/>
</dbReference>
<dbReference type="GO" id="GO:0031214">
    <property type="term" value="P:biomineral tissue development"/>
    <property type="evidence" value="ECO:0007669"/>
    <property type="project" value="UniProtKB-KW"/>
</dbReference>
<dbReference type="InterPro" id="IPR051375">
    <property type="entry name" value="Tuftelin_GRINL1A/MYZAP/CCD68"/>
</dbReference>
<dbReference type="PANTHER" id="PTHR23171">
    <property type="entry name" value="GDOWN1"/>
    <property type="match status" value="1"/>
</dbReference>
<dbReference type="PANTHER" id="PTHR23171:SF4">
    <property type="entry name" value="TUFTELIN"/>
    <property type="match status" value="1"/>
</dbReference>
<comment type="function">
    <text evidence="1 2">Involved in the structural organization of the epidermis (By similarity). Involved in the mineralization and structural organization of enamel.</text>
</comment>
<comment type="subunit">
    <text evidence="5">Interacts with TFIP11. May form oligomers.</text>
</comment>
<comment type="subcellular location">
    <subcellularLocation>
        <location evidence="1">Secreted</location>
    </subcellularLocation>
    <text evidence="1">Secreted at a very early stage of enamel formation, concentrated at the dentin-enamel junction and tightly bound to the surface of the growing crystallites.</text>
</comment>
<comment type="alternative products">
    <event type="alternative splicing"/>
    <isoform>
        <id>O08970-1</id>
        <name>1</name>
        <sequence type="displayed"/>
    </isoform>
    <isoform>
        <id>O08970-2</id>
        <name>2</name>
        <sequence type="described" ref="VSP_006687"/>
    </isoform>
    <isoform>
        <id>O08970-3</id>
        <name>3</name>
        <sequence type="described" ref="VSP_006687 VSP_006688"/>
    </isoform>
</comment>
<comment type="tissue specificity">
    <text evidence="8">Ameloblasts, and also non-odontogenic tissues including kidney, lung, liver and testis.</text>
</comment>
<comment type="developmental stage">
    <text evidence="6 7">Expressed in tooth from 13 dpc, the bud stage (PubMed:9074935). Continues to be expressed even when thick enamel is formed (PubMed:9074935). Expressed in first lower molars at birth (PubMed:21285247).</text>
</comment>
<comment type="similarity">
    <text evidence="11">Belongs to the tuftelin family.</text>
</comment>